<sequence>MGSAQARQRLLAIFGQVQAYIFQVEMLKRCDPLALLPLVGSLKLNALTIRMLRRKLGGALIEQAQHQQTPLACALTMALEYAEVEGERVLRAVDDVNLAGPEGFFRATMRLDEPCEYHVRVHLDTYGGPIDAEVQFLHDAENFLKQLNYCHLITGFEAGLDALESVARFLTRTVGSGIVVPPELCDPTHPCSVCFEELCVTANQGEAVHRRLLECTCDHITRQMAVRVANIDIARHLPHALSVASERRAAAEAALRALEARRVQGHNGKSAGTEDPTQQVASRLLESHHVFKPASRCLYAVSELKFWLASTKHGDMGQPRAIDTFTENLETLDKQEKFFHLQAATVELALFGRTLDHFDRLFADQLLGLDVIDGMLVGSCAVSPDDHIEALIKACYTHHMSAPLLQRLTDPDTSNREALKQLLGRIGVDTDDGAGELGDALDVDLDNLGGAPPVNSTPCGEDALCRTVSEERPWDKLLERATADASQRRRMYAERLSKRSIASLGRCVREQRRELEKTLRVNVYGEVLLHTYVSSYNGFCARRGFCAAVSRAGTIIDNRSSTSAFDSHQFMKAALLRHPIDQSLMPSITHKFFELINGPVFDNAGHNFAQPPNTALYYSVENVGLLPHLKEELARFMITAAKGDWSISEFQRFYCFEGVTGVTATQRLAWKYIGELILAAAVFSSVFHCGEVRLLRADRTYPDSSGAQRCVSGIYITYEASCPLVAVLSAAPHGAIGAETVVIYDSDVFSLLYAVLQQLAPGSGAN</sequence>
<dbReference type="EMBL" id="AY464052">
    <property type="protein sequence ID" value="AAS45916.1"/>
    <property type="status" value="ALT_INIT"/>
    <property type="molecule type" value="Genomic_DNA"/>
</dbReference>
<dbReference type="SMR" id="Q6S6N9"/>
<dbReference type="Proteomes" id="UP000008296">
    <property type="component" value="Segment"/>
</dbReference>
<dbReference type="GO" id="GO:0042025">
    <property type="term" value="C:host cell nucleus"/>
    <property type="evidence" value="ECO:0007669"/>
    <property type="project" value="UniProtKB-SubCell"/>
</dbReference>
<dbReference type="GO" id="GO:0005524">
    <property type="term" value="F:ATP binding"/>
    <property type="evidence" value="ECO:0007669"/>
    <property type="project" value="UniProtKB-KW"/>
</dbReference>
<dbReference type="GO" id="GO:0008270">
    <property type="term" value="F:zinc ion binding"/>
    <property type="evidence" value="ECO:0007669"/>
    <property type="project" value="UniProtKB-KW"/>
</dbReference>
<dbReference type="GO" id="GO:0019073">
    <property type="term" value="P:viral DNA genome packaging"/>
    <property type="evidence" value="ECO:0007669"/>
    <property type="project" value="InterPro"/>
</dbReference>
<dbReference type="HAMAP" id="MF_04014">
    <property type="entry name" value="HSV_TRM1"/>
    <property type="match status" value="1"/>
</dbReference>
<dbReference type="InterPro" id="IPR000501">
    <property type="entry name" value="UL28/UL56"/>
</dbReference>
<dbReference type="Pfam" id="PF01366">
    <property type="entry name" value="PRTP"/>
    <property type="match status" value="1"/>
</dbReference>
<accession>Q6S6N9</accession>
<reference key="1">
    <citation type="submission" date="2003-11" db="EMBL/GenBank/DDBJ databases">
        <authorList>
            <person name="Davis-Poynter N.J."/>
            <person name="Nugent J."/>
            <person name="Birch-Machin I."/>
            <person name="Allen G.P."/>
        </authorList>
    </citation>
    <scope>NUCLEOTIDE SEQUENCE [LARGE SCALE GENOMIC DNA]</scope>
</reference>
<organismHost>
    <name type="scientific">Equus caballus</name>
    <name type="common">Horse</name>
    <dbReference type="NCBI Taxonomy" id="9796"/>
</organismHost>
<gene>
    <name evidence="1" type="primary">TRM1</name>
    <name type="ordered locus">32</name>
</gene>
<protein>
    <recommendedName>
        <fullName evidence="1">Tripartite terminase subunit 1</fullName>
    </recommendedName>
</protein>
<evidence type="ECO:0000255" key="1">
    <source>
        <dbReference type="HAMAP-Rule" id="MF_04014"/>
    </source>
</evidence>
<evidence type="ECO:0000305" key="2"/>
<organism>
    <name type="scientific">Equine herpesvirus 1 (strain V592)</name>
    <name type="common">EHV-1</name>
    <name type="synonym">Equine abortion virus</name>
    <dbReference type="NCBI Taxonomy" id="310273"/>
    <lineage>
        <taxon>Viruses</taxon>
        <taxon>Duplodnaviria</taxon>
        <taxon>Heunggongvirae</taxon>
        <taxon>Peploviricota</taxon>
        <taxon>Herviviricetes</taxon>
        <taxon>Herpesvirales</taxon>
        <taxon>Orthoherpesviridae</taxon>
        <taxon>Alphaherpesvirinae</taxon>
        <taxon>Varicellovirus</taxon>
        <taxon>Varicellovirus equidalpha1</taxon>
        <taxon>Equid alphaherpesvirus 1</taxon>
    </lineage>
</organism>
<proteinExistence type="inferred from homology"/>
<feature type="chain" id="PRO_0000115881" description="Tripartite terminase subunit 1">
    <location>
        <begin position="1"/>
        <end position="766"/>
    </location>
</feature>
<feature type="zinc finger region" description="C3H1-type" evidence="1">
    <location>
        <begin position="191"/>
        <end position="219"/>
    </location>
</feature>
<feature type="binding site" evidence="1">
    <location>
        <begin position="683"/>
        <end position="690"/>
    </location>
    <ligand>
        <name>ATP</name>
        <dbReference type="ChEBI" id="CHEBI:30616"/>
    </ligand>
</feature>
<name>TRM1_EHV1V</name>
<keyword id="KW-0067">ATP-binding</keyword>
<keyword id="KW-1048">Host nucleus</keyword>
<keyword id="KW-0426">Late protein</keyword>
<keyword id="KW-0479">Metal-binding</keyword>
<keyword id="KW-0547">Nucleotide-binding</keyword>
<keyword id="KW-0231">Viral genome packaging</keyword>
<keyword id="KW-1188">Viral release from host cell</keyword>
<keyword id="KW-0862">Zinc</keyword>
<keyword id="KW-0863">Zinc-finger</keyword>
<comment type="function">
    <text evidence="1">Component of the molecular motor that translocates viral genomic DNA in empty capsid during DNA packaging. Forms a tripartite terminase complex together with TRM2 and TRM3 in the host cytoplasm. Once the complex reaches the host nucleus, it interacts with the capsid portal vertex. This portal forms a ring in which genomic DNA is translocated into the capsid. TRM1 carries an endonuclease activity that plays an important role for the cleavage of concatemeric viral DNA into unit length genomes.</text>
</comment>
<comment type="subunit">
    <text evidence="1">Associates with TRM2 and TRM3 to form the tripartite terminase complex. Interacts with portal protein.</text>
</comment>
<comment type="subcellular location">
    <subcellularLocation>
        <location evidence="1">Host nucleus</location>
    </subcellularLocation>
    <text evidence="1">Found associated with the external surface of the viral capsid during assembly and DNA packaging, but seems absent in extracellular mature virions.</text>
</comment>
<comment type="similarity">
    <text evidence="1">Belongs to the herpesviridae TRM1 protein family.</text>
</comment>
<comment type="sequence caution" evidence="2">
    <conflict type="erroneous initiation">
        <sequence resource="EMBL-CDS" id="AAS45916"/>
    </conflict>
</comment>